<dbReference type="EMBL" id="X06414">
    <property type="protein sequence ID" value="CAA29721.1"/>
    <property type="molecule type" value="Genomic_DNA"/>
</dbReference>
<dbReference type="EMBL" id="CP000123">
    <property type="protein sequence ID" value="ABC01587.1"/>
    <property type="status" value="ALT_INIT"/>
    <property type="molecule type" value="Genomic_DNA"/>
</dbReference>
<dbReference type="PIR" id="S02848">
    <property type="entry name" value="R3YM5C"/>
</dbReference>
<dbReference type="RefSeq" id="WP_011387534.1">
    <property type="nucleotide sequence ID" value="NC_007633.1"/>
</dbReference>
<dbReference type="SMR" id="P10128"/>
<dbReference type="GeneID" id="97127337"/>
<dbReference type="KEGG" id="mcp:MCAP_0679"/>
<dbReference type="HOGENOM" id="CLU_065898_2_0_14"/>
<dbReference type="PhylomeDB" id="P10128"/>
<dbReference type="Proteomes" id="UP000001928">
    <property type="component" value="Chromosome"/>
</dbReference>
<dbReference type="GO" id="GO:0015935">
    <property type="term" value="C:small ribosomal subunit"/>
    <property type="evidence" value="ECO:0007669"/>
    <property type="project" value="InterPro"/>
</dbReference>
<dbReference type="GO" id="GO:0019843">
    <property type="term" value="F:rRNA binding"/>
    <property type="evidence" value="ECO:0007669"/>
    <property type="project" value="UniProtKB-UniRule"/>
</dbReference>
<dbReference type="GO" id="GO:0003735">
    <property type="term" value="F:structural constituent of ribosome"/>
    <property type="evidence" value="ECO:0007669"/>
    <property type="project" value="InterPro"/>
</dbReference>
<dbReference type="GO" id="GO:0006412">
    <property type="term" value="P:translation"/>
    <property type="evidence" value="ECO:0007669"/>
    <property type="project" value="UniProtKB-UniRule"/>
</dbReference>
<dbReference type="FunFam" id="3.30.160.20:FF:000001">
    <property type="entry name" value="30S ribosomal protein S5"/>
    <property type="match status" value="1"/>
</dbReference>
<dbReference type="FunFam" id="3.30.230.10:FF:000002">
    <property type="entry name" value="30S ribosomal protein S5"/>
    <property type="match status" value="1"/>
</dbReference>
<dbReference type="Gene3D" id="3.30.160.20">
    <property type="match status" value="1"/>
</dbReference>
<dbReference type="Gene3D" id="3.30.230.10">
    <property type="match status" value="1"/>
</dbReference>
<dbReference type="HAMAP" id="MF_01307_B">
    <property type="entry name" value="Ribosomal_uS5_B"/>
    <property type="match status" value="1"/>
</dbReference>
<dbReference type="InterPro" id="IPR020568">
    <property type="entry name" value="Ribosomal_Su5_D2-typ_SF"/>
</dbReference>
<dbReference type="InterPro" id="IPR000851">
    <property type="entry name" value="Ribosomal_uS5"/>
</dbReference>
<dbReference type="InterPro" id="IPR005712">
    <property type="entry name" value="Ribosomal_uS5_bac-type"/>
</dbReference>
<dbReference type="InterPro" id="IPR005324">
    <property type="entry name" value="Ribosomal_uS5_C"/>
</dbReference>
<dbReference type="InterPro" id="IPR013810">
    <property type="entry name" value="Ribosomal_uS5_N"/>
</dbReference>
<dbReference type="InterPro" id="IPR018192">
    <property type="entry name" value="Ribosomal_uS5_N_CS"/>
</dbReference>
<dbReference type="InterPro" id="IPR014721">
    <property type="entry name" value="Ribsml_uS5_D2-typ_fold_subgr"/>
</dbReference>
<dbReference type="NCBIfam" id="TIGR01021">
    <property type="entry name" value="rpsE_bact"/>
    <property type="match status" value="1"/>
</dbReference>
<dbReference type="PANTHER" id="PTHR48277">
    <property type="entry name" value="MITOCHONDRIAL RIBOSOMAL PROTEIN S5"/>
    <property type="match status" value="1"/>
</dbReference>
<dbReference type="PANTHER" id="PTHR48277:SF1">
    <property type="entry name" value="MITOCHONDRIAL RIBOSOMAL PROTEIN S5"/>
    <property type="match status" value="1"/>
</dbReference>
<dbReference type="Pfam" id="PF00333">
    <property type="entry name" value="Ribosomal_S5"/>
    <property type="match status" value="1"/>
</dbReference>
<dbReference type="Pfam" id="PF03719">
    <property type="entry name" value="Ribosomal_S5_C"/>
    <property type="match status" value="1"/>
</dbReference>
<dbReference type="SUPFAM" id="SSF54768">
    <property type="entry name" value="dsRNA-binding domain-like"/>
    <property type="match status" value="1"/>
</dbReference>
<dbReference type="SUPFAM" id="SSF54211">
    <property type="entry name" value="Ribosomal protein S5 domain 2-like"/>
    <property type="match status" value="1"/>
</dbReference>
<dbReference type="PROSITE" id="PS00585">
    <property type="entry name" value="RIBOSOMAL_S5"/>
    <property type="match status" value="1"/>
</dbReference>
<dbReference type="PROSITE" id="PS50881">
    <property type="entry name" value="S5_DSRBD"/>
    <property type="match status" value="1"/>
</dbReference>
<name>RS5_MYCCT</name>
<sequence length="250" mass="27371">MNVVETSSEMNSNVEKASTPKQENNKRFERKSRPSSRQKVVKDEFEEKVVTIRRVTKVTKGGRHFRFAAVVVVGNKKGLVGMGTGKANEVPEAIKKAIKEAKKNLVSVTLRNTTVPHEVLGTFGAGKILIKPAKVGTGIIAGGPARAVIELSGISDVYAKSLGSNNAINMIRATFEGLSSMQTLKRVQELRYGKTFDKQKVALVEKTAETKNFEKKPPKSTTKKMASKKIEKEDVIAEPMIKNEAENSAE</sequence>
<accession>P10128</accession>
<accession>Q2SRH0</accession>
<proteinExistence type="inferred from homology"/>
<reference key="1">
    <citation type="journal article" date="1987" name="Mol. Gen. Genet.">
        <title>The ribosomal protein gene cluster of Mycoplasma capricolum.</title>
        <authorList>
            <person name="Ohkubo S."/>
            <person name="Muto A."/>
            <person name="Kawauchi Y."/>
            <person name="Yamao F."/>
            <person name="Osawa S."/>
        </authorList>
    </citation>
    <scope>NUCLEOTIDE SEQUENCE [GENOMIC DNA]</scope>
</reference>
<reference key="2">
    <citation type="submission" date="2005-09" db="EMBL/GenBank/DDBJ databases">
        <authorList>
            <person name="Glass J.I."/>
            <person name="Lartigue C."/>
            <person name="Pfannkoch C."/>
            <person name="Baden-Tillson H."/>
            <person name="Smith H.O."/>
            <person name="Venter J.C."/>
            <person name="Roske K."/>
            <person name="Wise K.S."/>
            <person name="Calcutt M.J."/>
            <person name="Nelson W.C."/>
            <person name="Nierman W.C."/>
        </authorList>
    </citation>
    <scope>NUCLEOTIDE SEQUENCE [LARGE SCALE GENOMIC DNA]</scope>
    <source>
        <strain>California kid / ATCC 27343 / NCTC 10154</strain>
    </source>
</reference>
<protein>
    <recommendedName>
        <fullName evidence="1">Small ribosomal subunit protein uS5</fullName>
    </recommendedName>
    <alternativeName>
        <fullName evidence="3">30S ribosomal protein S5</fullName>
    </alternativeName>
</protein>
<evidence type="ECO:0000255" key="1">
    <source>
        <dbReference type="HAMAP-Rule" id="MF_01307"/>
    </source>
</evidence>
<evidence type="ECO:0000256" key="2">
    <source>
        <dbReference type="SAM" id="MobiDB-lite"/>
    </source>
</evidence>
<evidence type="ECO:0000305" key="3"/>
<keyword id="KW-0687">Ribonucleoprotein</keyword>
<keyword id="KW-0689">Ribosomal protein</keyword>
<keyword id="KW-0694">RNA-binding</keyword>
<keyword id="KW-0699">rRNA-binding</keyword>
<organism>
    <name type="scientific">Mycoplasma capricolum subsp. capricolum (strain California kid / ATCC 27343 / NCTC 10154)</name>
    <dbReference type="NCBI Taxonomy" id="340047"/>
    <lineage>
        <taxon>Bacteria</taxon>
        <taxon>Bacillati</taxon>
        <taxon>Mycoplasmatota</taxon>
        <taxon>Mollicutes</taxon>
        <taxon>Mycoplasmataceae</taxon>
        <taxon>Mycoplasma</taxon>
    </lineage>
</organism>
<comment type="function">
    <text evidence="1">With S4 and S12 plays an important role in translational accuracy.</text>
</comment>
<comment type="function">
    <text evidence="1">Located at the back of the 30S subunit body where it stabilizes the conformation of the head with respect to the body.</text>
</comment>
<comment type="subunit">
    <text evidence="1">Part of the 30S ribosomal subunit. Contacts proteins S4 and S8.</text>
</comment>
<comment type="domain">
    <text>The N-terminal domain interacts with the head of the 30S subunit; the C-terminal domain interacts with the body and contacts protein S4. The interaction surface between S4 and S5 is involved in control of translational fidelity.</text>
</comment>
<comment type="similarity">
    <text evidence="1">Belongs to the universal ribosomal protein uS5 family.</text>
</comment>
<comment type="sequence caution" evidence="3">
    <conflict type="erroneous initiation">
        <sequence resource="EMBL-CDS" id="ABC01587"/>
    </conflict>
</comment>
<feature type="chain" id="PRO_0000131545" description="Small ribosomal subunit protein uS5">
    <location>
        <begin position="1"/>
        <end position="250"/>
    </location>
</feature>
<feature type="domain" description="S5 DRBM" evidence="1">
    <location>
        <begin position="45"/>
        <end position="108"/>
    </location>
</feature>
<feature type="region of interest" description="Disordered" evidence="2">
    <location>
        <begin position="1"/>
        <end position="40"/>
    </location>
</feature>
<feature type="compositionally biased region" description="Polar residues" evidence="2">
    <location>
        <begin position="1"/>
        <end position="22"/>
    </location>
</feature>
<feature type="sequence conflict" description="In Ref. 1; CAA29721." evidence="3" ref="1">
    <original>T</original>
    <variation>A</variation>
    <location>
        <position position="114"/>
    </location>
</feature>
<feature type="sequence conflict" description="In Ref. 1; CAA29721." evidence="3" ref="1">
    <original>EV</original>
    <variation>WS</variation>
    <location>
        <begin position="118"/>
        <end position="119"/>
    </location>
</feature>
<feature type="sequence conflict" description="In Ref. 1; CAA29721." evidence="3" ref="1">
    <original>A</original>
    <variation>S</variation>
    <location>
        <position position="147"/>
    </location>
</feature>
<gene>
    <name evidence="1" type="primary">rpsE</name>
    <name type="ordered locus">MCAP_0679</name>
</gene>